<accession>F8J2E2</accession>
<organism>
    <name type="scientific">Drysdalia coronoides</name>
    <name type="common">White-lipped snake</name>
    <name type="synonym">Hoplocephalus coronoides</name>
    <dbReference type="NCBI Taxonomy" id="66186"/>
    <lineage>
        <taxon>Eukaryota</taxon>
        <taxon>Metazoa</taxon>
        <taxon>Chordata</taxon>
        <taxon>Craniata</taxon>
        <taxon>Vertebrata</taxon>
        <taxon>Euteleostomi</taxon>
        <taxon>Lepidosauria</taxon>
        <taxon>Squamata</taxon>
        <taxon>Bifurcata</taxon>
        <taxon>Unidentata</taxon>
        <taxon>Episquamata</taxon>
        <taxon>Toxicofera</taxon>
        <taxon>Serpentes</taxon>
        <taxon>Colubroidea</taxon>
        <taxon>Elapidae</taxon>
        <taxon>Notechinae</taxon>
        <taxon>Drysdalia</taxon>
    </lineage>
</organism>
<protein>
    <recommendedName>
        <fullName>Long neurotoxin 77</fullName>
        <shortName>LNTX-77</shortName>
    </recommendedName>
</protein>
<sequence length="92" mass="9948">MKTLLLTLVVVTIVCLDLGDSLICYMGPKTPRTCPPGENLCYTKTWCDAFCSIRGRRVDLGCAATCPTAKPGVDITCCSTDKCNPHPAHQSR</sequence>
<dbReference type="EMBL" id="FJ752460">
    <property type="protein sequence ID" value="ACR78482.1"/>
    <property type="molecule type" value="mRNA"/>
</dbReference>
<dbReference type="SMR" id="F8J2E2"/>
<dbReference type="GO" id="GO:0005576">
    <property type="term" value="C:extracellular region"/>
    <property type="evidence" value="ECO:0007669"/>
    <property type="project" value="UniProtKB-SubCell"/>
</dbReference>
<dbReference type="GO" id="GO:0030550">
    <property type="term" value="F:acetylcholine receptor inhibitor activity"/>
    <property type="evidence" value="ECO:0007669"/>
    <property type="project" value="UniProtKB-KW"/>
</dbReference>
<dbReference type="GO" id="GO:0099106">
    <property type="term" value="F:ion channel regulator activity"/>
    <property type="evidence" value="ECO:0007669"/>
    <property type="project" value="UniProtKB-KW"/>
</dbReference>
<dbReference type="GO" id="GO:0090729">
    <property type="term" value="F:toxin activity"/>
    <property type="evidence" value="ECO:0007669"/>
    <property type="project" value="UniProtKB-KW"/>
</dbReference>
<dbReference type="CDD" id="cd00206">
    <property type="entry name" value="TFP_snake_toxin"/>
    <property type="match status" value="1"/>
</dbReference>
<dbReference type="Gene3D" id="2.10.60.10">
    <property type="entry name" value="CD59"/>
    <property type="match status" value="1"/>
</dbReference>
<dbReference type="InterPro" id="IPR003571">
    <property type="entry name" value="Snake_3FTx"/>
</dbReference>
<dbReference type="InterPro" id="IPR045860">
    <property type="entry name" value="Snake_toxin-like_sf"/>
</dbReference>
<dbReference type="InterPro" id="IPR018354">
    <property type="entry name" value="Snake_toxin_con_site"/>
</dbReference>
<dbReference type="InterPro" id="IPR054131">
    <property type="entry name" value="Toxin_cobra-type"/>
</dbReference>
<dbReference type="Pfam" id="PF21947">
    <property type="entry name" value="Toxin_cobra-type"/>
    <property type="match status" value="1"/>
</dbReference>
<dbReference type="SUPFAM" id="SSF57302">
    <property type="entry name" value="Snake toxin-like"/>
    <property type="match status" value="1"/>
</dbReference>
<dbReference type="PROSITE" id="PS00272">
    <property type="entry name" value="SNAKE_TOXIN"/>
    <property type="match status" value="1"/>
</dbReference>
<name>3L277_DRYCN</name>
<proteinExistence type="evidence at protein level"/>
<keyword id="KW-0008">Acetylcholine receptor inhibiting toxin</keyword>
<keyword id="KW-1015">Disulfide bond</keyword>
<keyword id="KW-0872">Ion channel impairing toxin</keyword>
<keyword id="KW-0528">Neurotoxin</keyword>
<keyword id="KW-0629">Postsynaptic neurotoxin</keyword>
<keyword id="KW-0964">Secreted</keyword>
<keyword id="KW-0732">Signal</keyword>
<keyword id="KW-0800">Toxin</keyword>
<comment type="function">
    <text evidence="2">Binds with high affinity to muscular (alpha-1/CHRNA1) and neuronal (alpha-7/CHRNA7) nicotinic acetylcholine receptor (nAChR) and inhibits acetylcholine from binding to the receptor, thereby impairing neuromuscular and neuronal transmission.</text>
</comment>
<comment type="subcellular location">
    <subcellularLocation>
        <location evidence="3">Secreted</location>
    </subcellularLocation>
</comment>
<comment type="tissue specificity">
    <text evidence="4">Expressed by the venom gland.</text>
</comment>
<comment type="similarity">
    <text evidence="4">Belongs to the three-finger toxin family. Long-chain subfamily. Type II alpha-neurotoxin sub-subfamily.</text>
</comment>
<feature type="signal peptide" evidence="1">
    <location>
        <begin position="1"/>
        <end position="21"/>
    </location>
</feature>
<feature type="chain" id="PRO_0000425525" description="Long neurotoxin 77">
    <location>
        <begin position="22"/>
        <end position="92"/>
    </location>
</feature>
<feature type="disulfide bond" evidence="1">
    <location>
        <begin position="24"/>
        <end position="41"/>
    </location>
</feature>
<feature type="disulfide bond" evidence="1">
    <location>
        <begin position="34"/>
        <end position="62"/>
    </location>
</feature>
<feature type="disulfide bond" evidence="1">
    <location>
        <begin position="47"/>
        <end position="51"/>
    </location>
</feature>
<feature type="disulfide bond" evidence="1">
    <location>
        <begin position="66"/>
        <end position="77"/>
    </location>
</feature>
<feature type="disulfide bond" evidence="1">
    <location>
        <begin position="78"/>
        <end position="83"/>
    </location>
</feature>
<evidence type="ECO:0000250" key="1"/>
<evidence type="ECO:0000250" key="2">
    <source>
        <dbReference type="UniProtKB" id="P60615"/>
    </source>
</evidence>
<evidence type="ECO:0000269" key="3">
    <source>
    </source>
</evidence>
<evidence type="ECO:0000305" key="4"/>
<reference key="1">
    <citation type="journal article" date="2011" name="J. Proteome Res.">
        <title>Identification of novel proteins from the venom of a cryptic snake Drysdalia coronoides by a combined transcriptomics and proteomics approach.</title>
        <authorList>
            <person name="Chatrath S.T."/>
            <person name="Chapeaurouge A."/>
            <person name="Lin Q."/>
            <person name="Lim T.K."/>
            <person name="Dunstan N."/>
            <person name="Mirtschin P."/>
            <person name="Kumar P.P."/>
            <person name="Kini R.M."/>
        </authorList>
    </citation>
    <scope>NUCLEOTIDE SEQUENCE [MRNA]</scope>
    <scope>IDENTIFICATION BY MASS SPECTROMETRY</scope>
    <scope>SUBCELLULAR LOCATION</scope>
    <source>
        <tissue>Venom</tissue>
        <tissue>Venom gland</tissue>
    </source>
</reference>